<name>DNAK_AMOA5</name>
<comment type="function">
    <text evidence="1">Acts as a chaperone.</text>
</comment>
<comment type="induction">
    <text evidence="1">By stress conditions e.g. heat shock.</text>
</comment>
<comment type="similarity">
    <text evidence="1">Belongs to the heat shock protein 70 family.</text>
</comment>
<dbReference type="EMBL" id="CP001102">
    <property type="protein sequence ID" value="ACE05890.1"/>
    <property type="molecule type" value="Genomic_DNA"/>
</dbReference>
<dbReference type="RefSeq" id="WP_012472654.1">
    <property type="nucleotide sequence ID" value="NC_010830.1"/>
</dbReference>
<dbReference type="SMR" id="B3ERN8"/>
<dbReference type="STRING" id="452471.Aasi_0481"/>
<dbReference type="KEGG" id="aas:Aasi_0481"/>
<dbReference type="eggNOG" id="COG0443">
    <property type="taxonomic scope" value="Bacteria"/>
</dbReference>
<dbReference type="HOGENOM" id="CLU_005965_2_4_10"/>
<dbReference type="OrthoDB" id="9766019at2"/>
<dbReference type="Proteomes" id="UP000001227">
    <property type="component" value="Chromosome"/>
</dbReference>
<dbReference type="GO" id="GO:0005524">
    <property type="term" value="F:ATP binding"/>
    <property type="evidence" value="ECO:0007669"/>
    <property type="project" value="UniProtKB-UniRule"/>
</dbReference>
<dbReference type="GO" id="GO:0140662">
    <property type="term" value="F:ATP-dependent protein folding chaperone"/>
    <property type="evidence" value="ECO:0007669"/>
    <property type="project" value="InterPro"/>
</dbReference>
<dbReference type="GO" id="GO:0051082">
    <property type="term" value="F:unfolded protein binding"/>
    <property type="evidence" value="ECO:0007669"/>
    <property type="project" value="InterPro"/>
</dbReference>
<dbReference type="CDD" id="cd10234">
    <property type="entry name" value="ASKHA_NBD_HSP70_DnaK-like"/>
    <property type="match status" value="1"/>
</dbReference>
<dbReference type="FunFam" id="2.60.34.10:FF:000014">
    <property type="entry name" value="Chaperone protein DnaK HSP70"/>
    <property type="match status" value="1"/>
</dbReference>
<dbReference type="FunFam" id="1.20.1270.10:FF:000001">
    <property type="entry name" value="Molecular chaperone DnaK"/>
    <property type="match status" value="1"/>
</dbReference>
<dbReference type="FunFam" id="3.30.420.40:FF:000004">
    <property type="entry name" value="Molecular chaperone DnaK"/>
    <property type="match status" value="1"/>
</dbReference>
<dbReference type="FunFam" id="3.90.640.10:FF:000003">
    <property type="entry name" value="Molecular chaperone DnaK"/>
    <property type="match status" value="1"/>
</dbReference>
<dbReference type="Gene3D" id="1.20.1270.10">
    <property type="match status" value="1"/>
</dbReference>
<dbReference type="Gene3D" id="3.30.420.40">
    <property type="match status" value="2"/>
</dbReference>
<dbReference type="Gene3D" id="3.90.640.10">
    <property type="entry name" value="Actin, Chain A, domain 4"/>
    <property type="match status" value="1"/>
</dbReference>
<dbReference type="Gene3D" id="2.60.34.10">
    <property type="entry name" value="Substrate Binding Domain Of DNAk, Chain A, domain 1"/>
    <property type="match status" value="1"/>
</dbReference>
<dbReference type="HAMAP" id="MF_00332">
    <property type="entry name" value="DnaK"/>
    <property type="match status" value="1"/>
</dbReference>
<dbReference type="InterPro" id="IPR043129">
    <property type="entry name" value="ATPase_NBD"/>
</dbReference>
<dbReference type="InterPro" id="IPR012725">
    <property type="entry name" value="Chaperone_DnaK"/>
</dbReference>
<dbReference type="InterPro" id="IPR018181">
    <property type="entry name" value="Heat_shock_70_CS"/>
</dbReference>
<dbReference type="InterPro" id="IPR029048">
    <property type="entry name" value="HSP70_C_sf"/>
</dbReference>
<dbReference type="InterPro" id="IPR029047">
    <property type="entry name" value="HSP70_peptide-bd_sf"/>
</dbReference>
<dbReference type="InterPro" id="IPR013126">
    <property type="entry name" value="Hsp_70_fam"/>
</dbReference>
<dbReference type="NCBIfam" id="NF001413">
    <property type="entry name" value="PRK00290.1"/>
    <property type="match status" value="1"/>
</dbReference>
<dbReference type="NCBIfam" id="NF003520">
    <property type="entry name" value="PRK05183.1"/>
    <property type="match status" value="1"/>
</dbReference>
<dbReference type="NCBIfam" id="TIGR02350">
    <property type="entry name" value="prok_dnaK"/>
    <property type="match status" value="1"/>
</dbReference>
<dbReference type="PANTHER" id="PTHR19375">
    <property type="entry name" value="HEAT SHOCK PROTEIN 70KDA"/>
    <property type="match status" value="1"/>
</dbReference>
<dbReference type="Pfam" id="PF00012">
    <property type="entry name" value="HSP70"/>
    <property type="match status" value="1"/>
</dbReference>
<dbReference type="PRINTS" id="PR00301">
    <property type="entry name" value="HEATSHOCK70"/>
</dbReference>
<dbReference type="SUPFAM" id="SSF53067">
    <property type="entry name" value="Actin-like ATPase domain"/>
    <property type="match status" value="2"/>
</dbReference>
<dbReference type="SUPFAM" id="SSF100920">
    <property type="entry name" value="Heat shock protein 70kD (HSP70), peptide-binding domain"/>
    <property type="match status" value="1"/>
</dbReference>
<dbReference type="PROSITE" id="PS00297">
    <property type="entry name" value="HSP70_1"/>
    <property type="match status" value="1"/>
</dbReference>
<dbReference type="PROSITE" id="PS00329">
    <property type="entry name" value="HSP70_2"/>
    <property type="match status" value="1"/>
</dbReference>
<dbReference type="PROSITE" id="PS01036">
    <property type="entry name" value="HSP70_3"/>
    <property type="match status" value="1"/>
</dbReference>
<feature type="chain" id="PRO_1000119662" description="Chaperone protein DnaK">
    <location>
        <begin position="1"/>
        <end position="632"/>
    </location>
</feature>
<feature type="region of interest" description="Disordered" evidence="2">
    <location>
        <begin position="597"/>
        <end position="632"/>
    </location>
</feature>
<feature type="compositionally biased region" description="Low complexity" evidence="2">
    <location>
        <begin position="597"/>
        <end position="611"/>
    </location>
</feature>
<feature type="compositionally biased region" description="Polar residues" evidence="2">
    <location>
        <begin position="612"/>
        <end position="621"/>
    </location>
</feature>
<feature type="modified residue" description="Phosphothreonine; by autocatalysis" evidence="1">
    <location>
        <position position="199"/>
    </location>
</feature>
<evidence type="ECO:0000255" key="1">
    <source>
        <dbReference type="HAMAP-Rule" id="MF_00332"/>
    </source>
</evidence>
<evidence type="ECO:0000256" key="2">
    <source>
        <dbReference type="SAM" id="MobiDB-lite"/>
    </source>
</evidence>
<organism>
    <name type="scientific">Amoebophilus asiaticus (strain 5a2)</name>
    <dbReference type="NCBI Taxonomy" id="452471"/>
    <lineage>
        <taxon>Bacteria</taxon>
        <taxon>Pseudomonadati</taxon>
        <taxon>Bacteroidota</taxon>
        <taxon>Cytophagia</taxon>
        <taxon>Cytophagales</taxon>
        <taxon>Amoebophilaceae</taxon>
        <taxon>Candidatus Amoebophilus</taxon>
    </lineage>
</organism>
<keyword id="KW-0067">ATP-binding</keyword>
<keyword id="KW-0143">Chaperone</keyword>
<keyword id="KW-0547">Nucleotide-binding</keyword>
<keyword id="KW-0597">Phosphoprotein</keyword>
<keyword id="KW-1185">Reference proteome</keyword>
<keyword id="KW-0346">Stress response</keyword>
<proteinExistence type="inferred from homology"/>
<sequence length="632" mass="68377">MGKIIGIDLGTTNSCVAVMEGNEPVVIANSEGKRTTPSVVAFLNEGQGERKVGDAAKRQAIINPQNTISSIKRFMGKRYSDIAEESKLVPYQLEKGNNDTVRVRIGDRTYTPQEISAMILQKMKTTAEDYLGTTVKEAVITVPAYFNDAERQATKEAGQIAGLEVKRIINEPTAAALAYGLDKKNQDMKIAVFDLGGGTFDISILELGDGVFEVKSTNGDVHLGGDNFDQKLIDWLAEEFKKEESVDLRKDPTALQRLKEAAEKAKIELSGSSTTEVNLPYITAIDGVPKHLVKKITRAQFEQLVDGLVRRTLEPCKKAMQDAGLTVADIDEVILVGGSTRIPKIQEEVEKFFNKKPSKGVNPDEVVAVGAAIQGGVLTGEVKDVLLLDVIPLSFGIETLGGVYTKLIEANTTIPTKKSEVFSTAADSQSSVEIHVLQGERAMARDNRTIGKFHLDGIPPAPRGIPQIEVTFDIDANGILNVSAKDKGTGKEQKIRIEASSGLTDEEIKKMKQEAEANAEADKQEREKVDKLNTADATIFQAQKQLQELGDKIPADTKKSAEDAIEELKKAHEAKDIAAIDTAMSKVNAALQQLYAAAQQAGQAEGQAAQEPSQSTGNAQAEATDAEYEEVK</sequence>
<protein>
    <recommendedName>
        <fullName evidence="1">Chaperone protein DnaK</fullName>
    </recommendedName>
    <alternativeName>
        <fullName evidence="1">HSP70</fullName>
    </alternativeName>
    <alternativeName>
        <fullName evidence="1">Heat shock 70 kDa protein</fullName>
    </alternativeName>
    <alternativeName>
        <fullName evidence="1">Heat shock protein 70</fullName>
    </alternativeName>
</protein>
<reference key="1">
    <citation type="journal article" date="2010" name="J. Bacteriol.">
        <title>The genome of the amoeba symbiont 'Candidatus Amoebophilus asiaticus' reveals common mechanisms for host cell interaction among amoeba-associated bacteria.</title>
        <authorList>
            <person name="Schmitz-Esser S."/>
            <person name="Tischler P."/>
            <person name="Arnold R."/>
            <person name="Montanaro J."/>
            <person name="Wagner M."/>
            <person name="Rattei T."/>
            <person name="Horn M."/>
        </authorList>
    </citation>
    <scope>NUCLEOTIDE SEQUENCE [LARGE SCALE GENOMIC DNA]</scope>
    <source>
        <strain>5a2</strain>
    </source>
</reference>
<gene>
    <name evidence="1" type="primary">dnaK</name>
    <name type="ordered locus">Aasi_0481</name>
</gene>
<accession>B3ERN8</accession>